<keyword id="KW-0025">Alternative splicing</keyword>
<keyword id="KW-0256">Endoplasmic reticulum</keyword>
<keyword id="KW-0349">Heme</keyword>
<keyword id="KW-0408">Iron</keyword>
<keyword id="KW-0472">Membrane</keyword>
<keyword id="KW-0479">Metal-binding</keyword>
<keyword id="KW-0492">Microsome</keyword>
<keyword id="KW-0503">Monooxygenase</keyword>
<keyword id="KW-0560">Oxidoreductase</keyword>
<keyword id="KW-1185">Reference proteome</keyword>
<protein>
    <recommendedName>
        <fullName>Cytochrome P450 3A43</fullName>
        <ecNumber>1.14.14.1</ecNumber>
    </recommendedName>
</protein>
<sequence>MDLIPNFAMETWVLVATSLVLLYIYGTHSHKLFKKLGIPGPTPLPFLGTILFYLRGLWNFDRECNEKYGEMWGLYEGQQPMLVIMDPDMIKTVLVKECYSVFTNQMPLGPMGFLKSALSFAEDEEWKRIRTLLSPAFTSVKFKEMVPIISQCGDMLVRSLRQEAENSKSINLKDFFGAYTMDVITGTLFGVNLDSLNNPQDPFLKNMKKLLKLDFLDPFLLLISLFPFLTPVFEALNIGLFPKDVTHFLKNSIERMKESRLKDKQKHRVDFFQQMIDSQNSKETKSHKALSDLELVAQSIIIIFAAYDTTSTTLPFIMYELATHPDVQQKLQEEIDAVLPNKAPVTYDALVQMEYLDMVVNETLRLFPVVSRVTRVCKKDIEINGVFIPKGLAVMVPIYALHHDPKYWTEPEKFCPERFSKKNKDSIDLYRYIPFGAGPRNCIGMRFALTNIKLAVIRALQNFSFKPCKETQIPLKLDNLPILQPEKPIVLKVHLRDGITSGP</sequence>
<gene>
    <name type="primary">CYP3A43</name>
</gene>
<name>CP343_HUMAN</name>
<reference key="1">
    <citation type="journal article" date="2001" name="Mol. Pharmacol.">
        <title>cDNA cloning and initial characterization of CYP3A43, a novel human cytochrome P450.</title>
        <authorList>
            <person name="Domanski T.L."/>
            <person name="Finta C."/>
            <person name="Halpert J.R."/>
            <person name="Zaphiropoulos P.G."/>
        </authorList>
    </citation>
    <scope>NUCLEOTIDE SEQUENCE [MRNA] (ISOFORM 1)</scope>
    <scope>TISSUE SPECIFICITY</scope>
    <scope>CHARACTERIZATION</scope>
</reference>
<reference key="2">
    <citation type="journal article" date="2001" name="Biochem. Biophys. Res. Commun.">
        <title>Cloning and tissue distribution of a novel human cytochrome P450 of the CYP3A subfamily, CYP3A43.</title>
        <authorList>
            <person name="Westlind A."/>
            <person name="Malmebo S."/>
            <person name="Johansson I."/>
            <person name="Otter C."/>
            <person name="Andersson T.B."/>
            <person name="Ingelman-Sundberg M."/>
            <person name="Oscarson M."/>
        </authorList>
    </citation>
    <scope>NUCLEOTIDE SEQUENCE [MRNA] (ISOFORM 1)</scope>
    <scope>TISSUE SPECIFICITY</scope>
</reference>
<reference key="3">
    <citation type="journal article" date="2001" name="Pharmacogenetics">
        <title>Genomic organization of the human CYP3A locus: identification of a new, inducible CYP3A gene.</title>
        <authorList>
            <person name="Gellner K."/>
            <person name="Eiselt R."/>
            <person name="Hustert E."/>
            <person name="Arnold H."/>
            <person name="Koch I."/>
            <person name="Haberl M."/>
            <person name="Deglmann C.J."/>
            <person name="Burk O."/>
            <person name="Buntefuss D."/>
            <person name="Escher S."/>
            <person name="Bishop C."/>
            <person name="Koebe H.-G."/>
            <person name="Brinkmann U."/>
            <person name="Klenk H.-P."/>
            <person name="Kleine K."/>
            <person name="Meyer U.A."/>
            <person name="Wojnowski L."/>
        </authorList>
    </citation>
    <scope>NUCLEOTIDE SEQUENCE [GENOMIC DNA / MRNA]</scope>
    <scope>ALTERNATIVE SPLICING</scope>
    <source>
        <tissue>Liver</tissue>
    </source>
</reference>
<reference key="4">
    <citation type="journal article" date="2004" name="Hum. Mutat.">
        <title>First report of a genetic polymorphism of the cytochrome P450 3A43 (CYP3A43) gene: identification of a loss-of-function variant.</title>
        <authorList>
            <person name="Cauffiez C."/>
            <person name="Lo-Guidice J.-M."/>
            <person name="Chevalier D."/>
            <person name="Allorge D."/>
            <person name="Hamdan R."/>
            <person name="Lhermitte M."/>
            <person name="Lafitte J.-J."/>
            <person name="Colombel J.-F."/>
            <person name="Libersa C."/>
            <person name="Broly F."/>
        </authorList>
    </citation>
    <scope>NUCLEOTIDE SEQUENCE [MRNA] (ALLELE CYP3A43*2)</scope>
    <scope>VARIANT CYP3A43*3 ALA-340</scope>
</reference>
<reference key="5">
    <citation type="journal article" date="2003" name="Nature">
        <title>The DNA sequence of human chromosome 7.</title>
        <authorList>
            <person name="Hillier L.W."/>
            <person name="Fulton R.S."/>
            <person name="Fulton L.A."/>
            <person name="Graves T.A."/>
            <person name="Pepin K.H."/>
            <person name="Wagner-McPherson C."/>
            <person name="Layman D."/>
            <person name="Maas J."/>
            <person name="Jaeger S."/>
            <person name="Walker R."/>
            <person name="Wylie K."/>
            <person name="Sekhon M."/>
            <person name="Becker M.C."/>
            <person name="O'Laughlin M.D."/>
            <person name="Schaller M.E."/>
            <person name="Fewell G.A."/>
            <person name="Delehaunty K.D."/>
            <person name="Miner T.L."/>
            <person name="Nash W.E."/>
            <person name="Cordes M."/>
            <person name="Du H."/>
            <person name="Sun H."/>
            <person name="Edwards J."/>
            <person name="Bradshaw-Cordum H."/>
            <person name="Ali J."/>
            <person name="Andrews S."/>
            <person name="Isak A."/>
            <person name="Vanbrunt A."/>
            <person name="Nguyen C."/>
            <person name="Du F."/>
            <person name="Lamar B."/>
            <person name="Courtney L."/>
            <person name="Kalicki J."/>
            <person name="Ozersky P."/>
            <person name="Bielicki L."/>
            <person name="Scott K."/>
            <person name="Holmes A."/>
            <person name="Harkins R."/>
            <person name="Harris A."/>
            <person name="Strong C.M."/>
            <person name="Hou S."/>
            <person name="Tomlinson C."/>
            <person name="Dauphin-Kohlberg S."/>
            <person name="Kozlowicz-Reilly A."/>
            <person name="Leonard S."/>
            <person name="Rohlfing T."/>
            <person name="Rock S.M."/>
            <person name="Tin-Wollam A.-M."/>
            <person name="Abbott A."/>
            <person name="Minx P."/>
            <person name="Maupin R."/>
            <person name="Strowmatt C."/>
            <person name="Latreille P."/>
            <person name="Miller N."/>
            <person name="Johnson D."/>
            <person name="Murray J."/>
            <person name="Woessner J.P."/>
            <person name="Wendl M.C."/>
            <person name="Yang S.-P."/>
            <person name="Schultz B.R."/>
            <person name="Wallis J.W."/>
            <person name="Spieth J."/>
            <person name="Bieri T.A."/>
            <person name="Nelson J.O."/>
            <person name="Berkowicz N."/>
            <person name="Wohldmann P.E."/>
            <person name="Cook L.L."/>
            <person name="Hickenbotham M.T."/>
            <person name="Eldred J."/>
            <person name="Williams D."/>
            <person name="Bedell J.A."/>
            <person name="Mardis E.R."/>
            <person name="Clifton S.W."/>
            <person name="Chissoe S.L."/>
            <person name="Marra M.A."/>
            <person name="Raymond C."/>
            <person name="Haugen E."/>
            <person name="Gillett W."/>
            <person name="Zhou Y."/>
            <person name="James R."/>
            <person name="Phelps K."/>
            <person name="Iadanoto S."/>
            <person name="Bubb K."/>
            <person name="Simms E."/>
            <person name="Levy R."/>
            <person name="Clendenning J."/>
            <person name="Kaul R."/>
            <person name="Kent W.J."/>
            <person name="Furey T.S."/>
            <person name="Baertsch R.A."/>
            <person name="Brent M.R."/>
            <person name="Keibler E."/>
            <person name="Flicek P."/>
            <person name="Bork P."/>
            <person name="Suyama M."/>
            <person name="Bailey J.A."/>
            <person name="Portnoy M.E."/>
            <person name="Torrents D."/>
            <person name="Chinwalla A.T."/>
            <person name="Gish W.R."/>
            <person name="Eddy S.R."/>
            <person name="McPherson J.D."/>
            <person name="Olson M.V."/>
            <person name="Eichler E.E."/>
            <person name="Green E.D."/>
            <person name="Waterston R.H."/>
            <person name="Wilson R.K."/>
        </authorList>
    </citation>
    <scope>NUCLEOTIDE SEQUENCE [LARGE SCALE GENOMIC DNA]</scope>
</reference>
<reference key="6">
    <citation type="submission" date="2005-09" db="EMBL/GenBank/DDBJ databases">
        <authorList>
            <person name="Mural R.J."/>
            <person name="Istrail S."/>
            <person name="Sutton G."/>
            <person name="Florea L."/>
            <person name="Halpern A.L."/>
            <person name="Mobarry C.M."/>
            <person name="Lippert R."/>
            <person name="Walenz B."/>
            <person name="Shatkay H."/>
            <person name="Dew I."/>
            <person name="Miller J.R."/>
            <person name="Flanigan M.J."/>
            <person name="Edwards N.J."/>
            <person name="Bolanos R."/>
            <person name="Fasulo D."/>
            <person name="Halldorsson B.V."/>
            <person name="Hannenhalli S."/>
            <person name="Turner R."/>
            <person name="Yooseph S."/>
            <person name="Lu F."/>
            <person name="Nusskern D.R."/>
            <person name="Shue B.C."/>
            <person name="Zheng X.H."/>
            <person name="Zhong F."/>
            <person name="Delcher A.L."/>
            <person name="Huson D.H."/>
            <person name="Kravitz S.A."/>
            <person name="Mouchard L."/>
            <person name="Reinert K."/>
            <person name="Remington K.A."/>
            <person name="Clark A.G."/>
            <person name="Waterman M.S."/>
            <person name="Eichler E.E."/>
            <person name="Adams M.D."/>
            <person name="Hunkapiller M.W."/>
            <person name="Myers E.W."/>
            <person name="Venter J.C."/>
        </authorList>
    </citation>
    <scope>NUCLEOTIDE SEQUENCE [LARGE SCALE GENOMIC DNA]</scope>
</reference>
<reference key="7">
    <citation type="journal article" date="2004" name="Genome Res.">
        <title>The status, quality, and expansion of the NIH full-length cDNA project: the Mammalian Gene Collection (MGC).</title>
        <authorList>
            <consortium name="The MGC Project Team"/>
        </authorList>
    </citation>
    <scope>NUCLEOTIDE SEQUENCE [LARGE SCALE MRNA] (ISOFORM 7)</scope>
</reference>
<reference key="8">
    <citation type="journal article" date="2002" name="J. Biol. Chem.">
        <title>Intergenic mRNA molecules resulting from trans-splicing.</title>
        <authorList>
            <person name="Finta C."/>
            <person name="Zaphiropoulos P.G."/>
        </authorList>
    </citation>
    <scope>TRANS-SPLICING</scope>
</reference>
<reference key="9">
    <citation type="journal article" date="2004" name="Genome Biol.">
        <title>An unappreciated role for RNA surveillance.</title>
        <authorList>
            <person name="Hillman R.T."/>
            <person name="Green R.E."/>
            <person name="Brenner S.E."/>
        </authorList>
    </citation>
    <scope>SPLICE ISOFORM(S) THAT ARE POTENTIAL NMD TARGET(S)</scope>
</reference>
<feature type="chain" id="PRO_0000051814" description="Cytochrome P450 3A43">
    <location>
        <begin position="1"/>
        <end position="503"/>
    </location>
</feature>
<feature type="binding site" description="axial binding residue" evidence="1">
    <location>
        <position position="442"/>
    </location>
    <ligand>
        <name>heme</name>
        <dbReference type="ChEBI" id="CHEBI:30413"/>
    </ligand>
    <ligandPart>
        <name>Fe</name>
        <dbReference type="ChEBI" id="CHEBI:18248"/>
    </ligandPart>
</feature>
<feature type="splice variant" id="VSP_056736" description="In isoform 7." evidence="5">
    <original>GLWNFDRECNEKYGEMWGLYEGQQPMLVIMDPDMIKTVLVKECYSVFTNQMPLGPMGFLKSALSFAEDEEWKRIRTLLSPAFTSVKFKEMVPIISQCGDMLVRSLRQEAENSKSINLKDFFGAYTMDVITGTLFGVNLDSLNNPQDPFLKNMKKLLKLDFLDPFLLLIS</original>
    <variation>RSLNKIPSWAWWLTPVIPALWEAEAGGSPKVRSSRPALPTWVFGILTENVMKNTEKCGA</variation>
    <location>
        <begin position="56"/>
        <end position="224"/>
    </location>
</feature>
<feature type="splice variant" id="VSP_000612" description="In isoform 4." evidence="6">
    <original>SLFPFLTPVFEALNIGLFPKDVTHFLK</original>
    <variation>YRVSLCCLGRSAWCDLGSLKPPPPGFE</variation>
    <location>
        <begin position="224"/>
        <end position="250"/>
    </location>
</feature>
<feature type="splice variant" id="VSP_000613" description="In isoform 4." evidence="6">
    <location>
        <begin position="251"/>
        <end position="503"/>
    </location>
</feature>
<feature type="splice variant" id="VSP_000609" description="In isoform 2." evidence="6">
    <original>E</original>
    <variation>ES</variation>
    <location>
        <position position="417"/>
    </location>
</feature>
<feature type="splice variant" id="VSP_000610" description="In isoform 3." evidence="6">
    <original>FS</original>
    <variation>SH</variation>
    <location>
        <begin position="419"/>
        <end position="420"/>
    </location>
</feature>
<feature type="splice variant" id="VSP_000611" description="In isoform 3." evidence="6">
    <location>
        <begin position="421"/>
        <end position="503"/>
    </location>
</feature>
<feature type="sequence variant" id="VAR_018050" description="In allele CYP3A43*2.">
    <original>YGTHSHKLFKKLGIPGPTPLPFLGTILFYLRGLWNFDRECNEKYGEMWGLYEGQQPMLVIMDPD</original>
    <variation>LGPIHINFLRSWEFLGQPLCLFWELFCSTLGVFGILTENVMKNTEKCGGCMRGNSPCWSSWIPT</variation>
    <location>
        <begin position="25"/>
        <end position="88"/>
    </location>
</feature>
<feature type="sequence variant" id="VAR_048449" description="In dbSNP:rs45558032.">
    <original>T</original>
    <variation>A</variation>
    <location>
        <position position="27"/>
    </location>
</feature>
<feature type="sequence variant" id="VAR_018051" description="In allele CYP3A43*2.">
    <location>
        <begin position="89"/>
        <end position="503"/>
    </location>
</feature>
<feature type="sequence variant" id="VAR_048450" description="In dbSNP:rs45450092.">
    <original>M</original>
    <variation>I</variation>
    <location>
        <position position="145"/>
    </location>
</feature>
<feature type="sequence variant" id="VAR_048451" description="In dbSNP:rs45621431.">
    <original>M</original>
    <variation>I</variation>
    <location>
        <position position="275"/>
    </location>
</feature>
<feature type="sequence variant" id="VAR_018052" description="In allele CYP3A43*3; dbSNP:rs680055." evidence="4">
    <original>P</original>
    <variation>A</variation>
    <location>
        <position position="340"/>
    </location>
</feature>
<organism>
    <name type="scientific">Homo sapiens</name>
    <name type="common">Human</name>
    <dbReference type="NCBI Taxonomy" id="9606"/>
    <lineage>
        <taxon>Eukaryota</taxon>
        <taxon>Metazoa</taxon>
        <taxon>Chordata</taxon>
        <taxon>Craniata</taxon>
        <taxon>Vertebrata</taxon>
        <taxon>Euteleostomi</taxon>
        <taxon>Mammalia</taxon>
        <taxon>Eutheria</taxon>
        <taxon>Euarchontoglires</taxon>
        <taxon>Primates</taxon>
        <taxon>Haplorrhini</taxon>
        <taxon>Catarrhini</taxon>
        <taxon>Hominidae</taxon>
        <taxon>Homo</taxon>
    </lineage>
</organism>
<accession>Q9HB55</accession>
<accession>Q495Y1</accession>
<accession>Q75MK2</accession>
<accession>Q75MK3</accession>
<accession>Q9HB52</accession>
<accession>Q9HB53</accession>
<accession>Q9HB54</accession>
<accession>Q9HB57</accession>
<dbReference type="EC" id="1.14.14.1"/>
<dbReference type="EMBL" id="AF319634">
    <property type="protein sequence ID" value="AAK00325.1"/>
    <property type="molecule type" value="mRNA"/>
</dbReference>
<dbReference type="EMBL" id="AF337813">
    <property type="protein sequence ID" value="AAK38841.1"/>
    <property type="molecule type" value="mRNA"/>
</dbReference>
<dbReference type="EMBL" id="AF280107">
    <property type="protein sequence ID" value="AAG32291.1"/>
    <property type="molecule type" value="Genomic_DNA"/>
</dbReference>
<dbReference type="EMBL" id="AF280108">
    <property type="protein sequence ID" value="AAG33009.1"/>
    <property type="molecule type" value="mRNA"/>
</dbReference>
<dbReference type="EMBL" id="AF280109">
    <property type="protein sequence ID" value="AAG33010.1"/>
    <property type="molecule type" value="mRNA"/>
</dbReference>
<dbReference type="EMBL" id="AF280110">
    <property type="protein sequence ID" value="AAG33011.1"/>
    <property type="molecule type" value="mRNA"/>
</dbReference>
<dbReference type="EMBL" id="AF280111">
    <property type="protein sequence ID" value="AAG33012.1"/>
    <property type="molecule type" value="mRNA"/>
</dbReference>
<dbReference type="EMBL" id="AY390423">
    <property type="protein sequence ID" value="AAQ92351.1"/>
    <property type="molecule type" value="mRNA"/>
</dbReference>
<dbReference type="EMBL" id="AY390424">
    <property type="protein sequence ID" value="AAQ92352.1"/>
    <property type="molecule type" value="mRNA"/>
</dbReference>
<dbReference type="EMBL" id="AY390425">
    <property type="protein sequence ID" value="AAQ92353.1"/>
    <property type="molecule type" value="mRNA"/>
</dbReference>
<dbReference type="EMBL" id="AY390426">
    <property type="protein sequence ID" value="AAQ92354.1"/>
    <property type="molecule type" value="mRNA"/>
</dbReference>
<dbReference type="EMBL" id="AC011904">
    <property type="protein sequence ID" value="AAS07394.1"/>
    <property type="molecule type" value="Genomic_DNA"/>
</dbReference>
<dbReference type="EMBL" id="AC011904">
    <property type="protein sequence ID" value="AAS07395.1"/>
    <property type="molecule type" value="Genomic_DNA"/>
</dbReference>
<dbReference type="EMBL" id="CH471091">
    <property type="protein sequence ID" value="EAW76632.1"/>
    <property type="molecule type" value="Genomic_DNA"/>
</dbReference>
<dbReference type="EMBL" id="CH471091">
    <property type="protein sequence ID" value="EAW76634.1"/>
    <property type="molecule type" value="Genomic_DNA"/>
</dbReference>
<dbReference type="EMBL" id="BC100981">
    <property type="protein sequence ID" value="AAI00982.1"/>
    <property type="molecule type" value="mRNA"/>
</dbReference>
<dbReference type="CCDS" id="CCDS5675.1">
    <molecule id="Q9HB55-2"/>
</dbReference>
<dbReference type="CCDS" id="CCDS5676.1">
    <molecule id="Q9HB55-1"/>
</dbReference>
<dbReference type="CCDS" id="CCDS5677.1">
    <molecule id="Q9HB55-3"/>
</dbReference>
<dbReference type="CCDS" id="CCDS64723.1">
    <molecule id="Q9HB55-6"/>
</dbReference>
<dbReference type="PIR" id="JC7627">
    <property type="entry name" value="JC7627"/>
</dbReference>
<dbReference type="RefSeq" id="NP_001265850.1">
    <molecule id="Q9HB55-6"/>
    <property type="nucleotide sequence ID" value="NM_001278921.2"/>
</dbReference>
<dbReference type="RefSeq" id="NP_073731.1">
    <molecule id="Q9HB55-2"/>
    <property type="nucleotide sequence ID" value="NM_022820.5"/>
</dbReference>
<dbReference type="RefSeq" id="NP_476436.1">
    <molecule id="Q9HB55-1"/>
    <property type="nucleotide sequence ID" value="NM_057095.3"/>
</dbReference>
<dbReference type="RefSeq" id="NP_476437.1">
    <molecule id="Q9HB55-3"/>
    <property type="nucleotide sequence ID" value="NM_057096.4"/>
</dbReference>
<dbReference type="SMR" id="Q9HB55"/>
<dbReference type="BioGRID" id="122311">
    <property type="interactions" value="27"/>
</dbReference>
<dbReference type="FunCoup" id="Q9HB55">
    <property type="interactions" value="271"/>
</dbReference>
<dbReference type="IntAct" id="Q9HB55">
    <property type="interactions" value="19"/>
</dbReference>
<dbReference type="STRING" id="9606.ENSP00000222382"/>
<dbReference type="BindingDB" id="Q9HB55"/>
<dbReference type="ChEMBL" id="CHEMBL5792"/>
<dbReference type="DrugBank" id="DB11703">
    <property type="generic name" value="Acalabrutinib"/>
</dbReference>
<dbReference type="DrugBank" id="DB13141">
    <property type="generic name" value="Ambroxol acefyllinate"/>
</dbReference>
<dbReference type="DrugBank" id="DB16536">
    <property type="generic name" value="Birch bark extract"/>
</dbReference>
<dbReference type="DrugBank" id="DB12267">
    <property type="generic name" value="Brigatinib"/>
</dbReference>
<dbReference type="DrugBank" id="DB01222">
    <property type="generic name" value="Budesonide"/>
</dbReference>
<dbReference type="DrugBank" id="DB08865">
    <property type="generic name" value="Crizotinib"/>
</dbReference>
<dbReference type="DrugBank" id="DB09102">
    <property type="generic name" value="Daclatasvir"/>
</dbReference>
<dbReference type="DrugBank" id="DB01234">
    <property type="generic name" value="Dexamethasone"/>
</dbReference>
<dbReference type="DrugBank" id="DB14649">
    <property type="generic name" value="Dexamethasone acetate"/>
</dbReference>
<dbReference type="DrugBank" id="DB00647">
    <property type="generic name" value="Dextropropoxyphene"/>
</dbReference>
<dbReference type="DrugBank" id="DB11994">
    <property type="generic name" value="Diacerein"/>
</dbReference>
<dbReference type="DrugBank" id="DB08930">
    <property type="generic name" value="Dolutegravir"/>
</dbReference>
<dbReference type="DrugBank" id="DB11742">
    <property type="generic name" value="Ebastine"/>
</dbReference>
<dbReference type="DrugBank" id="DB11979">
    <property type="generic name" value="Elagolix"/>
</dbReference>
<dbReference type="DrugBank" id="DB11574">
    <property type="generic name" value="Elbasvir"/>
</dbReference>
<dbReference type="DrugBank" id="DB00593">
    <property type="generic name" value="Ethosuximide"/>
</dbReference>
<dbReference type="DrugBank" id="DB00176">
    <property type="generic name" value="Fluvoxamine"/>
</dbReference>
<dbReference type="DrugBank" id="DB12307">
    <property type="generic name" value="Foretinib"/>
</dbReference>
<dbReference type="DrugBank" id="DB13879">
    <property type="generic name" value="Glecaprevir"/>
</dbReference>
<dbReference type="DrugBank" id="DB09054">
    <property type="generic name" value="Idelalisib"/>
</dbReference>
<dbReference type="DrugBank" id="DB15275">
    <property type="generic name" value="Inavolisib"/>
</dbReference>
<dbReference type="DrugBank" id="DB11757">
    <property type="generic name" value="Istradefylline"/>
</dbReference>
<dbReference type="DrugBank" id="DB01167">
    <property type="generic name" value="Itraconazole"/>
</dbReference>
<dbReference type="DrugBank" id="DB11951">
    <property type="generic name" value="Lemborexant"/>
</dbReference>
<dbReference type="DrugBank" id="DB12070">
    <property type="generic name" value="Letermovir"/>
</dbReference>
<dbReference type="DrugBank" id="DB06448">
    <property type="generic name" value="Lonafarnib"/>
</dbReference>
<dbReference type="DrugBank" id="DB01601">
    <property type="generic name" value="Lopinavir"/>
</dbReference>
<dbReference type="DrugBank" id="DB12130">
    <property type="generic name" value="Lorlatinib"/>
</dbReference>
<dbReference type="DrugBank" id="DB09212">
    <property type="generic name" value="Loxoprofen"/>
</dbReference>
<dbReference type="DrugBank" id="DB00643">
    <property type="generic name" value="Mebendazole"/>
</dbReference>
<dbReference type="DrugBank" id="DB00333">
    <property type="generic name" value="Methadone"/>
</dbReference>
<dbReference type="DrugBank" id="DB00959">
    <property type="generic name" value="Methylprednisolone"/>
</dbReference>
<dbReference type="DrugBank" id="DB06595">
    <property type="generic name" value="Midostaurin"/>
</dbReference>
<dbReference type="DrugBank" id="DB11792">
    <property type="generic name" value="Mirodenafil"/>
</dbReference>
<dbReference type="DrugBank" id="DB09205">
    <property type="generic name" value="Moxisylyte"/>
</dbReference>
<dbReference type="DrugBank" id="DB11605">
    <property type="generic name" value="Myrrh"/>
</dbReference>
<dbReference type="DrugBank" id="DB11691">
    <property type="generic name" value="Naldemedine"/>
</dbReference>
<dbReference type="DrugBank" id="DB01149">
    <property type="generic name" value="Nefazodone"/>
</dbReference>
<dbReference type="DrugBank" id="DB09048">
    <property type="generic name" value="Netupitant"/>
</dbReference>
<dbReference type="DrugBank" id="DB00334">
    <property type="generic name" value="Olanzapine"/>
</dbReference>
<dbReference type="DrugBank" id="DB09568">
    <property type="generic name" value="Omega-3-carboxylic acids"/>
</dbReference>
<dbReference type="DrugBank" id="DB06412">
    <property type="generic name" value="Oxymetholone"/>
</dbReference>
<dbReference type="DrugBank" id="DB00780">
    <property type="generic name" value="Phenelzine"/>
</dbReference>
<dbReference type="DrugBank" id="DB13878">
    <property type="generic name" value="Pibrentasvir"/>
</dbReference>
<dbReference type="DrugBank" id="DB14631">
    <property type="generic name" value="Prednisolone phosphate"/>
</dbReference>
<dbReference type="DrugBank" id="DB00635">
    <property type="generic name" value="Prednisone"/>
</dbReference>
<dbReference type="DrugBank" id="DB04216">
    <property type="generic name" value="Quercetin"/>
</dbReference>
<dbReference type="DrugBank" id="DB11853">
    <property type="generic name" value="Relugolix"/>
</dbReference>
<dbReference type="DrugBank" id="DB00409">
    <property type="generic name" value="Remoxipride"/>
</dbReference>
<dbReference type="DrugBank" id="DB13174">
    <property type="generic name" value="Rhein"/>
</dbReference>
<dbReference type="DrugBank" id="DB01045">
    <property type="generic name" value="Rifampin"/>
</dbReference>
<dbReference type="DrugBank" id="DB01201">
    <property type="generic name" value="Rifapentine"/>
</dbReference>
<dbReference type="DrugBank" id="DB15305">
    <property type="generic name" value="Risdiplam"/>
</dbReference>
<dbReference type="DrugBank" id="DB12332">
    <property type="generic name" value="Rucaparib"/>
</dbReference>
<dbReference type="DrugBank" id="DB15685">
    <property type="generic name" value="Selpercatinib"/>
</dbReference>
<dbReference type="DrugBank" id="DB15569">
    <property type="generic name" value="Sotorasib"/>
</dbReference>
<dbReference type="DrugBank" id="DB12887">
    <property type="generic name" value="Tazemetostat"/>
</dbReference>
<dbReference type="DrugBank" id="DB00624">
    <property type="generic name" value="Testosterone"/>
</dbReference>
<dbReference type="DrugBank" id="DB13943">
    <property type="generic name" value="Testosterone cypionate"/>
</dbReference>
<dbReference type="DrugBank" id="DB13944">
    <property type="generic name" value="Testosterone enanthate"/>
</dbReference>
<dbReference type="DrugBank" id="DB13946">
    <property type="generic name" value="Testosterone undecanoate"/>
</dbReference>
<dbReference type="DrugBank" id="DB00599">
    <property type="generic name" value="Thiopental"/>
</dbReference>
<dbReference type="DrugBank" id="DB13179">
    <property type="generic name" value="Troleandomycin"/>
</dbReference>
<dbReference type="DrugBank" id="DB11652">
    <property type="generic name" value="Tucatinib"/>
</dbReference>
<dbReference type="DrugBank" id="DB01586">
    <property type="generic name" value="Ursodeoxycholic acid"/>
</dbReference>
<dbReference type="DrugBank" id="DB15035">
    <property type="generic name" value="Zanubrutinib"/>
</dbReference>
<dbReference type="DrugCentral" id="Q9HB55"/>
<dbReference type="GlyGen" id="Q9HB55">
    <property type="glycosylation" value="2 sites, 1 O-linked glycan (1 site)"/>
</dbReference>
<dbReference type="iPTMnet" id="Q9HB55"/>
<dbReference type="PhosphoSitePlus" id="Q9HB55"/>
<dbReference type="BioMuta" id="CYP3A43"/>
<dbReference type="DMDM" id="20137481"/>
<dbReference type="jPOST" id="Q9HB55"/>
<dbReference type="MassIVE" id="Q9HB55"/>
<dbReference type="PaxDb" id="9606-ENSP00000222382"/>
<dbReference type="PeptideAtlas" id="Q9HB55"/>
<dbReference type="ProteomicsDB" id="61978"/>
<dbReference type="ProteomicsDB" id="81485">
    <molecule id="Q9HB55-1"/>
</dbReference>
<dbReference type="ProteomicsDB" id="81486">
    <molecule id="Q9HB55-2"/>
</dbReference>
<dbReference type="ProteomicsDB" id="81487">
    <molecule id="Q9HB55-3"/>
</dbReference>
<dbReference type="ProteomicsDB" id="81488">
    <molecule id="Q9HB55-4"/>
</dbReference>
<dbReference type="Antibodypedia" id="30450">
    <property type="antibodies" value="130 antibodies from 26 providers"/>
</dbReference>
<dbReference type="DNASU" id="64816"/>
<dbReference type="Ensembl" id="ENST00000222382.5">
    <molecule id="Q9HB55-2"/>
    <property type="protein sequence ID" value="ENSP00000222382.5"/>
    <property type="gene ID" value="ENSG00000021461.18"/>
</dbReference>
<dbReference type="Ensembl" id="ENST00000312017.9">
    <molecule id="Q9HB55-3"/>
    <property type="protein sequence ID" value="ENSP00000312110.5"/>
    <property type="gene ID" value="ENSG00000021461.18"/>
</dbReference>
<dbReference type="Ensembl" id="ENST00000354829.7">
    <molecule id="Q9HB55-1"/>
    <property type="protein sequence ID" value="ENSP00000346887.3"/>
    <property type="gene ID" value="ENSG00000021461.18"/>
</dbReference>
<dbReference type="Ensembl" id="ENST00000417625.5">
    <molecule id="Q9HB55-6"/>
    <property type="protein sequence ID" value="ENSP00000416581.1"/>
    <property type="gene ID" value="ENSG00000021461.18"/>
</dbReference>
<dbReference type="Ensembl" id="ENST00000434806.5">
    <molecule id="Q9HB55-4"/>
    <property type="protein sequence ID" value="ENSP00000411653.1"/>
    <property type="gene ID" value="ENSG00000021461.18"/>
</dbReference>
<dbReference type="GeneID" id="64816"/>
<dbReference type="KEGG" id="hsa:64816"/>
<dbReference type="MANE-Select" id="ENST00000354829.7">
    <property type="protein sequence ID" value="ENSP00000346887.3"/>
    <property type="RefSeq nucleotide sequence ID" value="NM_057095.3"/>
    <property type="RefSeq protein sequence ID" value="NP_476436.1"/>
</dbReference>
<dbReference type="UCSC" id="uc003urx.3">
    <molecule id="Q9HB55-1"/>
    <property type="organism name" value="human"/>
</dbReference>
<dbReference type="AGR" id="HGNC:17450"/>
<dbReference type="CTD" id="64816"/>
<dbReference type="DisGeNET" id="64816"/>
<dbReference type="GeneCards" id="CYP3A43"/>
<dbReference type="HGNC" id="HGNC:17450">
    <property type="gene designation" value="CYP3A43"/>
</dbReference>
<dbReference type="HPA" id="ENSG00000021461">
    <property type="expression patterns" value="Tissue enriched (liver)"/>
</dbReference>
<dbReference type="MIM" id="606534">
    <property type="type" value="gene"/>
</dbReference>
<dbReference type="neXtProt" id="NX_Q9HB55"/>
<dbReference type="OpenTargets" id="ENSG00000021461"/>
<dbReference type="PharmGKB" id="PA427"/>
<dbReference type="VEuPathDB" id="HostDB:ENSG00000021461"/>
<dbReference type="eggNOG" id="KOG0158">
    <property type="taxonomic scope" value="Eukaryota"/>
</dbReference>
<dbReference type="GeneTree" id="ENSGT00950000182958"/>
<dbReference type="HOGENOM" id="CLU_001570_5_2_1"/>
<dbReference type="InParanoid" id="Q9HB55"/>
<dbReference type="OMA" id="FARAFHW"/>
<dbReference type="OrthoDB" id="1470350at2759"/>
<dbReference type="PAN-GO" id="Q9HB55">
    <property type="GO annotations" value="4 GO annotations based on evolutionary models"/>
</dbReference>
<dbReference type="PhylomeDB" id="Q9HB55"/>
<dbReference type="TreeFam" id="TF105087"/>
<dbReference type="PathwayCommons" id="Q9HB55"/>
<dbReference type="Reactome" id="R-HSA-211958">
    <property type="pathway name" value="Miscellaneous substrates"/>
</dbReference>
<dbReference type="Reactome" id="R-HSA-211981">
    <property type="pathway name" value="Xenobiotics"/>
</dbReference>
<dbReference type="SignaLink" id="Q9HB55"/>
<dbReference type="BioGRID-ORCS" id="64816">
    <property type="hits" value="42 hits in 1145 CRISPR screens"/>
</dbReference>
<dbReference type="GeneWiki" id="CYP3A43"/>
<dbReference type="GenomeRNAi" id="64816"/>
<dbReference type="Pharos" id="Q9HB55">
    <property type="development level" value="Tclin"/>
</dbReference>
<dbReference type="PRO" id="PR:Q9HB55"/>
<dbReference type="Proteomes" id="UP000005640">
    <property type="component" value="Chromosome 7"/>
</dbReference>
<dbReference type="RNAct" id="Q9HB55">
    <property type="molecule type" value="protein"/>
</dbReference>
<dbReference type="Bgee" id="ENSG00000021461">
    <property type="expression patterns" value="Expressed in liver and 115 other cell types or tissues"/>
</dbReference>
<dbReference type="ExpressionAtlas" id="Q9HB55">
    <property type="expression patterns" value="baseline and differential"/>
</dbReference>
<dbReference type="GO" id="GO:0005789">
    <property type="term" value="C:endoplasmic reticulum membrane"/>
    <property type="evidence" value="ECO:0000304"/>
    <property type="project" value="Reactome"/>
</dbReference>
<dbReference type="GO" id="GO:0101020">
    <property type="term" value="F:estrogen 16-alpha-hydroxylase activity"/>
    <property type="evidence" value="ECO:0000318"/>
    <property type="project" value="GO_Central"/>
</dbReference>
<dbReference type="GO" id="GO:0020037">
    <property type="term" value="F:heme binding"/>
    <property type="evidence" value="ECO:0007669"/>
    <property type="project" value="InterPro"/>
</dbReference>
<dbReference type="GO" id="GO:0005506">
    <property type="term" value="F:iron ion binding"/>
    <property type="evidence" value="ECO:0007669"/>
    <property type="project" value="InterPro"/>
</dbReference>
<dbReference type="GO" id="GO:0004497">
    <property type="term" value="F:monooxygenase activity"/>
    <property type="evidence" value="ECO:0000250"/>
    <property type="project" value="UniProtKB"/>
</dbReference>
<dbReference type="GO" id="GO:0050649">
    <property type="term" value="F:testosterone 6-beta-hydroxylase activity"/>
    <property type="evidence" value="ECO:0000318"/>
    <property type="project" value="GO_Central"/>
</dbReference>
<dbReference type="GO" id="GO:1903604">
    <property type="term" value="P:cytochrome metabolic process"/>
    <property type="evidence" value="ECO:0000304"/>
    <property type="project" value="Reactome"/>
</dbReference>
<dbReference type="GO" id="GO:0070989">
    <property type="term" value="P:oxidative demethylation"/>
    <property type="evidence" value="ECO:0000318"/>
    <property type="project" value="GO_Central"/>
</dbReference>
<dbReference type="GO" id="GO:0008202">
    <property type="term" value="P:steroid metabolic process"/>
    <property type="evidence" value="ECO:0000318"/>
    <property type="project" value="GO_Central"/>
</dbReference>
<dbReference type="CDD" id="cd20650">
    <property type="entry name" value="CYP3A"/>
    <property type="match status" value="1"/>
</dbReference>
<dbReference type="FunFam" id="1.10.630.10:FF:000096">
    <property type="entry name" value="Cytochrome P450 3A4"/>
    <property type="match status" value="1"/>
</dbReference>
<dbReference type="Gene3D" id="1.10.630.10">
    <property type="entry name" value="Cytochrome P450"/>
    <property type="match status" value="1"/>
</dbReference>
<dbReference type="InterPro" id="IPR001128">
    <property type="entry name" value="Cyt_P450"/>
</dbReference>
<dbReference type="InterPro" id="IPR017972">
    <property type="entry name" value="Cyt_P450_CS"/>
</dbReference>
<dbReference type="InterPro" id="IPR008072">
    <property type="entry name" value="Cyt_P450_E_CYP3A"/>
</dbReference>
<dbReference type="InterPro" id="IPR002402">
    <property type="entry name" value="Cyt_P450_E_grp-II"/>
</dbReference>
<dbReference type="InterPro" id="IPR036396">
    <property type="entry name" value="Cyt_P450_sf"/>
</dbReference>
<dbReference type="InterPro" id="IPR050705">
    <property type="entry name" value="Cytochrome_P450_3A"/>
</dbReference>
<dbReference type="PANTHER" id="PTHR24302:SF6">
    <property type="entry name" value="CYTOCHROME P450 3A43"/>
    <property type="match status" value="1"/>
</dbReference>
<dbReference type="PANTHER" id="PTHR24302">
    <property type="entry name" value="CYTOCHROME P450 FAMILY 3"/>
    <property type="match status" value="1"/>
</dbReference>
<dbReference type="Pfam" id="PF00067">
    <property type="entry name" value="p450"/>
    <property type="match status" value="1"/>
</dbReference>
<dbReference type="PRINTS" id="PR00464">
    <property type="entry name" value="EP450II"/>
</dbReference>
<dbReference type="PRINTS" id="PR01689">
    <property type="entry name" value="EP450IICYP3A"/>
</dbReference>
<dbReference type="PRINTS" id="PR00385">
    <property type="entry name" value="P450"/>
</dbReference>
<dbReference type="SUPFAM" id="SSF48264">
    <property type="entry name" value="Cytochrome P450"/>
    <property type="match status" value="1"/>
</dbReference>
<dbReference type="PROSITE" id="PS00086">
    <property type="entry name" value="CYTOCHROME_P450"/>
    <property type="match status" value="1"/>
</dbReference>
<evidence type="ECO:0000250" key="1"/>
<evidence type="ECO:0000269" key="2">
    <source>
    </source>
</evidence>
<evidence type="ECO:0000269" key="3">
    <source>
    </source>
</evidence>
<evidence type="ECO:0000269" key="4">
    <source>
    </source>
</evidence>
<evidence type="ECO:0000303" key="5">
    <source>
    </source>
</evidence>
<evidence type="ECO:0000305" key="6"/>
<evidence type="ECO:0000305" key="7">
    <source>
    </source>
</evidence>
<comment type="function">
    <text>Exhibits low testosterone 6-beta-hydroxylase activity.</text>
</comment>
<comment type="catalytic activity">
    <reaction>
        <text>an organic molecule + reduced [NADPH--hemoprotein reductase] + O2 = an alcohol + oxidized [NADPH--hemoprotein reductase] + H2O + H(+)</text>
        <dbReference type="Rhea" id="RHEA:17149"/>
        <dbReference type="Rhea" id="RHEA-COMP:11964"/>
        <dbReference type="Rhea" id="RHEA-COMP:11965"/>
        <dbReference type="ChEBI" id="CHEBI:15377"/>
        <dbReference type="ChEBI" id="CHEBI:15378"/>
        <dbReference type="ChEBI" id="CHEBI:15379"/>
        <dbReference type="ChEBI" id="CHEBI:30879"/>
        <dbReference type="ChEBI" id="CHEBI:57618"/>
        <dbReference type="ChEBI" id="CHEBI:58210"/>
        <dbReference type="ChEBI" id="CHEBI:142491"/>
        <dbReference type="EC" id="1.14.14.1"/>
    </reaction>
</comment>
<comment type="cofactor">
    <cofactor evidence="1">
        <name>heme</name>
        <dbReference type="ChEBI" id="CHEBI:30413"/>
    </cofactor>
</comment>
<comment type="subcellular location">
    <subcellularLocation>
        <location>Endoplasmic reticulum membrane</location>
        <topology>Peripheral membrane protein</topology>
    </subcellularLocation>
    <subcellularLocation>
        <location>Microsome membrane</location>
        <topology>Peripheral membrane protein</topology>
    </subcellularLocation>
</comment>
<comment type="alternative products">
    <event type="alternative splicing"/>
    <isoform>
        <id>Q9HB55-1</id>
        <name>1</name>
        <sequence type="displayed"/>
    </isoform>
    <isoform>
        <id>Q9HB55-2</id>
        <name>2</name>
        <sequence type="described" ref="VSP_000609"/>
    </isoform>
    <isoform>
        <id>Q9HB55-3</id>
        <name>3</name>
        <sequence type="described" ref="VSP_000610 VSP_000611"/>
    </isoform>
    <isoform>
        <id>Q9HB55-4</id>
        <name>4</name>
        <sequence type="described" ref="VSP_000612 VSP_000613"/>
    </isoform>
    <isoform>
        <id>Q9HB55-6</id>
        <name>7</name>
        <sequence type="described" ref="VSP_056736"/>
    </isoform>
    <text>Additional isoforms seem to exist.</text>
</comment>
<comment type="tissue specificity">
    <text evidence="2 3">Highest expression level in prostate. Also expressed in liver, kidney, pancreas, fetal liver and fetal skeletal muscle.</text>
</comment>
<comment type="induction">
    <text>By rifampicin.</text>
</comment>
<comment type="polymorphism">
    <text>At protein level, three alleles are known: CYP3A43*1, CYP3A43*2 and CYP3A43*3. The sequence shown is that of CYP3A43*1, which is the most frequent allele. The allele CYP3A43*2 is likely to be non-functional.</text>
</comment>
<comment type="miscellaneous">
    <text evidence="7">Chimeric transcripts, characterized by CYP3A43 exon 1 joined at canonical splice sites to distinct sets of CYP3A4 or CYP3A5 exons, have been detected. All are possibly produced by trans-splicing. CYP3A43-CYP3A4 chimeric transcripts exist in 3 different combinations: CYP3A43 exon 1 joined in frame to CYP3A4 exons 2-13, CYP3A43 exon 1 joined in frame to CYP3A4 exons 4-13 and CYP3A43 exon 1 joined in frame to CYP3A4 exon 7-13. The longest chimeric isoform (CYP3A43 exon 1 joined to CYP3A4 exons 2-13) exhibits 6-beta-hydroxylase activity, while a shorter isoform (CYP3A43 exon 1 joined to CYP3A4 exons 4-13) does not. CYP3A43-CYP3A5 chimeric transcripts exist in 2 different combinations: CYP3A43 exon 1 joined in frame to CYP3A5 exon 11-13 and CYP3A43 exon 1 joined in frame to CYP3A5 exon 12-13. All chimeric transcripts are expressed at very low levels in the liver (PubMed:11726664).</text>
</comment>
<comment type="miscellaneous">
    <molecule>Isoform 4</molecule>
    <text evidence="6">May be produced at very low levels due to a premature stop codon in the mRNA, leading to nonsense-mediated mRNA decay.</text>
</comment>
<comment type="similarity">
    <text evidence="6">Belongs to the cytochrome P450 family.</text>
</comment>
<comment type="online information" name="PharmVar Pharmacogen Variation Consortium">
    <link uri="https://www.pharmvar.org/gene/CYP3A43"/>
    <text>CYP3A43 alleles</text>
</comment>
<proteinExistence type="evidence at protein level"/>